<proteinExistence type="inferred from homology"/>
<evidence type="ECO:0000250" key="1">
    <source>
        <dbReference type="UniProtKB" id="P07611"/>
    </source>
</evidence>
<evidence type="ECO:0000255" key="2"/>
<evidence type="ECO:0000256" key="3">
    <source>
        <dbReference type="SAM" id="MobiDB-lite"/>
    </source>
</evidence>
<evidence type="ECO:0000305" key="4"/>
<accession>A0A7H0DN66</accession>
<protein>
    <recommendedName>
        <fullName>Entry-fusion complex protein OPG094</fullName>
        <shortName>EFC protein OPG094</shortName>
    </recommendedName>
</protein>
<name>PG094_MONPV</name>
<feature type="initiator methionine" description="Removed; by host" evidence="1">
    <location>
        <position position="1"/>
    </location>
</feature>
<feature type="chain" id="PRO_0000457644" description="Entry-fusion complex protein OPG094">
    <location>
        <begin position="2"/>
        <end position="340"/>
    </location>
</feature>
<feature type="topological domain" description="Virion surface">
    <location>
        <begin position="2"/>
        <end position="319"/>
    </location>
</feature>
<feature type="transmembrane region" description="Helical; Signal-anchor for type II membrane protein" evidence="2">
    <location>
        <begin position="320"/>
        <end position="340"/>
    </location>
</feature>
<feature type="region of interest" description="Disordered" evidence="3">
    <location>
        <begin position="1"/>
        <end position="20"/>
    </location>
</feature>
<feature type="lipid moiety-binding region" description="N-myristoyl glycine; by host" evidence="1">
    <location>
        <position position="2"/>
    </location>
</feature>
<reference key="1">
    <citation type="journal article" date="2022" name="J. Infect. Dis.">
        <title>Exportation of Monkeypox virus from the African continent.</title>
        <authorList>
            <person name="Mauldin M.R."/>
            <person name="McCollum A.M."/>
            <person name="Nakazawa Y.J."/>
            <person name="Mandra A."/>
            <person name="Whitehouse E.R."/>
            <person name="Davidson W."/>
            <person name="Zhao H."/>
            <person name="Gao J."/>
            <person name="Li Y."/>
            <person name="Doty J."/>
            <person name="Yinka-Ogunleye A."/>
            <person name="Akinpelu A."/>
            <person name="Aruna O."/>
            <person name="Naidoo D."/>
            <person name="Lewandowski K."/>
            <person name="Afrough B."/>
            <person name="Graham V."/>
            <person name="Aarons E."/>
            <person name="Hewson R."/>
            <person name="Vipond R."/>
            <person name="Dunning J."/>
            <person name="Chand M."/>
            <person name="Brown C."/>
            <person name="Cohen-Gihon I."/>
            <person name="Erez N."/>
            <person name="Shifman O."/>
            <person name="Israeli O."/>
            <person name="Sharon M."/>
            <person name="Schwartz E."/>
            <person name="Beth-Din A."/>
            <person name="Zvi A."/>
            <person name="Mak T.M."/>
            <person name="Ng Y.K."/>
            <person name="Cui L."/>
            <person name="Lin R.T.P."/>
            <person name="Olson V.A."/>
            <person name="Brooks T."/>
            <person name="Paran N."/>
            <person name="Ihekweazu C."/>
            <person name="Reynolds M.G."/>
        </authorList>
    </citation>
    <scope>NUCLEOTIDE SEQUENCE [LARGE SCALE GENOMIC DNA]</scope>
    <source>
        <strain>MPXV-M5312_HM12_Rivers</strain>
    </source>
</reference>
<dbReference type="EMBL" id="MT903340">
    <property type="protein sequence ID" value="QNP12949.1"/>
    <property type="molecule type" value="Genomic_DNA"/>
</dbReference>
<dbReference type="RefSeq" id="YP_010377076.1">
    <property type="nucleotide sequence ID" value="NC_063383.1"/>
</dbReference>
<dbReference type="SMR" id="A0A7H0DN66"/>
<dbReference type="GeneID" id="72551489"/>
<dbReference type="Proteomes" id="UP000516359">
    <property type="component" value="Genome"/>
</dbReference>
<dbReference type="GO" id="GO:0016020">
    <property type="term" value="C:membrane"/>
    <property type="evidence" value="ECO:0007669"/>
    <property type="project" value="UniProtKB-KW"/>
</dbReference>
<dbReference type="GO" id="GO:0019031">
    <property type="term" value="C:viral envelope"/>
    <property type="evidence" value="ECO:0007669"/>
    <property type="project" value="UniProtKB-KW"/>
</dbReference>
<dbReference type="GO" id="GO:0055036">
    <property type="term" value="C:virion membrane"/>
    <property type="evidence" value="ECO:0007669"/>
    <property type="project" value="UniProtKB-SubCell"/>
</dbReference>
<dbReference type="GO" id="GO:0019064">
    <property type="term" value="P:fusion of virus membrane with host plasma membrane"/>
    <property type="evidence" value="ECO:0007669"/>
    <property type="project" value="UniProtKB-KW"/>
</dbReference>
<dbReference type="GO" id="GO:0046718">
    <property type="term" value="P:symbiont entry into host cell"/>
    <property type="evidence" value="ECO:0007669"/>
    <property type="project" value="UniProtKB-KW"/>
</dbReference>
<dbReference type="InterPro" id="IPR004251">
    <property type="entry name" value="Pox_virus_G9/A16"/>
</dbReference>
<dbReference type="Pfam" id="PF03003">
    <property type="entry name" value="Pox_G9-A16"/>
    <property type="match status" value="1"/>
</dbReference>
<organismHost>
    <name type="scientific">Cynomys gunnisoni</name>
    <name type="common">Gunnison's prairie dog</name>
    <name type="synonym">Spermophilus gunnisoni</name>
    <dbReference type="NCBI Taxonomy" id="45479"/>
</organismHost>
<organismHost>
    <name type="scientific">Cynomys leucurus</name>
    <name type="common">White-tailed prairie dog</name>
    <dbReference type="NCBI Taxonomy" id="99825"/>
</organismHost>
<organismHost>
    <name type="scientific">Cynomys ludovicianus</name>
    <name type="common">Black-tailed prairie dog</name>
    <dbReference type="NCBI Taxonomy" id="45480"/>
</organismHost>
<organismHost>
    <name type="scientific">Cynomys mexicanus</name>
    <name type="common">Mexican prairie dog</name>
    <dbReference type="NCBI Taxonomy" id="99826"/>
</organismHost>
<organismHost>
    <name type="scientific">Cynomys parvidens</name>
    <name type="common">Utah prairie dog</name>
    <dbReference type="NCBI Taxonomy" id="99827"/>
</organismHost>
<organismHost>
    <name type="scientific">Gliridae</name>
    <name type="common">dormice</name>
    <dbReference type="NCBI Taxonomy" id="30650"/>
</organismHost>
<organismHost>
    <name type="scientific">Heliosciurus ruwenzorii</name>
    <name type="common">Ruwenzori sun squirrel</name>
    <dbReference type="NCBI Taxonomy" id="226685"/>
</organismHost>
<organismHost>
    <name type="scientific">Homo sapiens</name>
    <name type="common">Human</name>
    <dbReference type="NCBI Taxonomy" id="9606"/>
</organismHost>
<organismHost>
    <name type="scientific">Mus musculus</name>
    <name type="common">Mouse</name>
    <dbReference type="NCBI Taxonomy" id="10090"/>
</organismHost>
<gene>
    <name type="primary">OPG094</name>
    <name type="ORF">MPXVgp079</name>
</gene>
<keyword id="KW-1169">Fusion of virus membrane with host cell membrane</keyword>
<keyword id="KW-1168">Fusion of virus membrane with host membrane</keyword>
<keyword id="KW-0426">Late protein</keyword>
<keyword id="KW-0449">Lipoprotein</keyword>
<keyword id="KW-0472">Membrane</keyword>
<keyword id="KW-0519">Myristate</keyword>
<keyword id="KW-1185">Reference proteome</keyword>
<keyword id="KW-0735">Signal-anchor</keyword>
<keyword id="KW-0812">Transmembrane</keyword>
<keyword id="KW-1133">Transmembrane helix</keyword>
<keyword id="KW-0261">Viral envelope protein</keyword>
<keyword id="KW-1162">Viral penetration into host cytoplasm</keyword>
<keyword id="KW-0946">Virion</keyword>
<keyword id="KW-1160">Virus entry into host cell</keyword>
<sequence length="340" mass="38902">MGGGVSVELPKRDPPPGVPTDEMLLNVDKMHDVIAPAKLLEYVHIGPLTKDKEDKVKKRYPEFRLVNTGPGGLSALLRQSYNGTAPNCCRTFNRTHYWKKDGKISDKYEEGAVLESCWPDVHDTGKCDVDLFDWCQGDTFDMNICHQWIGSAFNRSDRTVEGRQSLINLYNKMQRLCSKDASVPICELFLHHLRAHNTEDSKEMIDYILRQQSADFKQKYMRCSYPTRDKLEESLKYAEPRECWDPECSNANVNFLLTRNYNNLGLCNIVRCNTSVNNLQMDKTSSLRLSCGLSNSDRFSTVPVNRAKVVQHNIKHSFDLKLHLISLLSLLVIWILIVAI</sequence>
<comment type="function">
    <text evidence="1">Component of the entry fusion complex (EFC), which consists of 11 proteins. During cell infection, this complex mediates entry of the virion core into the host cytoplasm by a two-step mechanism consisting of lipid mixing of the viral and cellular membranes and subsequent pore formation.</text>
</comment>
<comment type="subunit">
    <text evidence="1">Interacts with OPG143. Component of the entry fusion complex (EFC) composed of OPG053, OPG076, OPG086, OPG094, OPG095, OPG099, OPG107, OPG143, OPG104, OPG147 and OPG155. Except for OPG095 and OPG053, each of the EFC proteins is required for assembly or stability of the complex.</text>
</comment>
<comment type="subcellular location">
    <subcellularLocation>
        <location evidence="1">Virion membrane</location>
        <topology evidence="1">Single-pass type II membrane protein</topology>
    </subcellularLocation>
    <text evidence="1">Component of the mature virion (MV) membrane. The mature virion is located in the cytoplasm of infected cells and is probably released by cell lysis.</text>
</comment>
<comment type="induction">
    <text evidence="1">Expressed in the late phase of the viral replicative cycle.</text>
</comment>
<comment type="PTM">
    <text evidence="1">Unglycosylated because produced in viral factories instead of the classic ER -Golgi route.</text>
</comment>
<comment type="similarity">
    <text evidence="4">Belongs to the orthopoxvirus OPG086 family.</text>
</comment>
<organism>
    <name type="scientific">Monkeypox virus</name>
    <dbReference type="NCBI Taxonomy" id="10244"/>
    <lineage>
        <taxon>Viruses</taxon>
        <taxon>Varidnaviria</taxon>
        <taxon>Bamfordvirae</taxon>
        <taxon>Nucleocytoviricota</taxon>
        <taxon>Pokkesviricetes</taxon>
        <taxon>Chitovirales</taxon>
        <taxon>Poxviridae</taxon>
        <taxon>Chordopoxvirinae</taxon>
        <taxon>Orthopoxvirus</taxon>
    </lineage>
</organism>